<feature type="chain" id="PRO_0000189277" description="4-diphosphocytidyl-2-C-methyl-D-erythritol kinase">
    <location>
        <begin position="1"/>
        <end position="271"/>
    </location>
</feature>
<feature type="active site" evidence="1">
    <location>
        <position position="17"/>
    </location>
</feature>
<feature type="active site" evidence="1">
    <location>
        <position position="137"/>
    </location>
</feature>
<feature type="binding site" evidence="1">
    <location>
        <begin position="97"/>
        <end position="107"/>
    </location>
    <ligand>
        <name>ATP</name>
        <dbReference type="ChEBI" id="CHEBI:30616"/>
    </ligand>
</feature>
<proteinExistence type="inferred from homology"/>
<keyword id="KW-0067">ATP-binding</keyword>
<keyword id="KW-0414">Isoprene biosynthesis</keyword>
<keyword id="KW-0418">Kinase</keyword>
<keyword id="KW-0547">Nucleotide-binding</keyword>
<keyword id="KW-1185">Reference proteome</keyword>
<keyword id="KW-0808">Transferase</keyword>
<evidence type="ECO:0000255" key="1">
    <source>
        <dbReference type="HAMAP-Rule" id="MF_00061"/>
    </source>
</evidence>
<sequence length="271" mass="30056">MVENIGSGSAELVSYAKLNLYLDVLGKRSDGYHEIVGLFQTISLHDTLTVEICDRGFYLESSVALPSDNTIKRAWEMFRKNTGKEFGLKVTLKKEIPVGSGLGGGSSNAAAVLRYLGEVFKIPLEDLLNIAAQVGSDVPFFLYGGTALVRGRGEIVEKLEDIEGYSVDLFFPGIHSSTKEMYLSLTPEMYRKGPGRVEELHRAYLERNYEKIKELSYNVFEKVFLEKHPEVMDGLRNFGDGSIVKMMTGSGSVFFALYPLDKGNYSFVGGV</sequence>
<accession>Q9X1A3</accession>
<dbReference type="EC" id="2.7.1.148" evidence="1"/>
<dbReference type="EMBL" id="AE000512">
    <property type="protein sequence ID" value="AAD36453.1"/>
    <property type="molecule type" value="Genomic_DNA"/>
</dbReference>
<dbReference type="PIR" id="H72261">
    <property type="entry name" value="H72261"/>
</dbReference>
<dbReference type="RefSeq" id="NP_229184.1">
    <property type="nucleotide sequence ID" value="NC_000853.1"/>
</dbReference>
<dbReference type="RefSeq" id="WP_004081581.1">
    <property type="nucleotide sequence ID" value="NC_000853.1"/>
</dbReference>
<dbReference type="SMR" id="Q9X1A3"/>
<dbReference type="FunCoup" id="Q9X1A3">
    <property type="interactions" value="350"/>
</dbReference>
<dbReference type="STRING" id="243274.TM_1383"/>
<dbReference type="PaxDb" id="243274-THEMA_07410"/>
<dbReference type="DNASU" id="898095"/>
<dbReference type="EnsemblBacteria" id="AAD36453">
    <property type="protein sequence ID" value="AAD36453"/>
    <property type="gene ID" value="TM_1383"/>
</dbReference>
<dbReference type="KEGG" id="tma:TM1383"/>
<dbReference type="KEGG" id="tmi:THEMA_07410"/>
<dbReference type="KEGG" id="tmm:Tmari_1390"/>
<dbReference type="KEGG" id="tmw:THMA_1410"/>
<dbReference type="eggNOG" id="COG1947">
    <property type="taxonomic scope" value="Bacteria"/>
</dbReference>
<dbReference type="InParanoid" id="Q9X1A3"/>
<dbReference type="OrthoDB" id="9809438at2"/>
<dbReference type="UniPathway" id="UPA00056">
    <property type="reaction ID" value="UER00094"/>
</dbReference>
<dbReference type="Proteomes" id="UP000008183">
    <property type="component" value="Chromosome"/>
</dbReference>
<dbReference type="GO" id="GO:0050515">
    <property type="term" value="F:4-(cytidine 5'-diphospho)-2-C-methyl-D-erythritol kinase activity"/>
    <property type="evidence" value="ECO:0000318"/>
    <property type="project" value="GO_Central"/>
</dbReference>
<dbReference type="GO" id="GO:0005524">
    <property type="term" value="F:ATP binding"/>
    <property type="evidence" value="ECO:0007669"/>
    <property type="project" value="UniProtKB-UniRule"/>
</dbReference>
<dbReference type="GO" id="GO:0019288">
    <property type="term" value="P:isopentenyl diphosphate biosynthetic process, methylerythritol 4-phosphate pathway"/>
    <property type="evidence" value="ECO:0007669"/>
    <property type="project" value="UniProtKB-UniRule"/>
</dbReference>
<dbReference type="GO" id="GO:0016114">
    <property type="term" value="P:terpenoid biosynthetic process"/>
    <property type="evidence" value="ECO:0007669"/>
    <property type="project" value="InterPro"/>
</dbReference>
<dbReference type="FunFam" id="3.30.230.10:FF:000171">
    <property type="entry name" value="4-diphosphocytidyl-2-C-methyl-D-erythritol kinase"/>
    <property type="match status" value="1"/>
</dbReference>
<dbReference type="FunFam" id="3.30.70.890:FF:000036">
    <property type="entry name" value="4-diphosphocytidyl-2-C-methyl-D-erythritol kinase"/>
    <property type="match status" value="1"/>
</dbReference>
<dbReference type="Gene3D" id="3.30.230.10">
    <property type="match status" value="1"/>
</dbReference>
<dbReference type="Gene3D" id="3.30.70.890">
    <property type="entry name" value="GHMP kinase, C-terminal domain"/>
    <property type="match status" value="1"/>
</dbReference>
<dbReference type="HAMAP" id="MF_00061">
    <property type="entry name" value="IspE"/>
    <property type="match status" value="1"/>
</dbReference>
<dbReference type="InterPro" id="IPR036554">
    <property type="entry name" value="GHMP_kinase_C_sf"/>
</dbReference>
<dbReference type="InterPro" id="IPR006204">
    <property type="entry name" value="GHMP_kinase_N_dom"/>
</dbReference>
<dbReference type="InterPro" id="IPR004424">
    <property type="entry name" value="IspE"/>
</dbReference>
<dbReference type="InterPro" id="IPR020568">
    <property type="entry name" value="Ribosomal_Su5_D2-typ_SF"/>
</dbReference>
<dbReference type="InterPro" id="IPR014721">
    <property type="entry name" value="Ribsml_uS5_D2-typ_fold_subgr"/>
</dbReference>
<dbReference type="NCBIfam" id="TIGR00154">
    <property type="entry name" value="ispE"/>
    <property type="match status" value="1"/>
</dbReference>
<dbReference type="PANTHER" id="PTHR43527">
    <property type="entry name" value="4-DIPHOSPHOCYTIDYL-2-C-METHYL-D-ERYTHRITOL KINASE, CHLOROPLASTIC"/>
    <property type="match status" value="1"/>
</dbReference>
<dbReference type="PANTHER" id="PTHR43527:SF2">
    <property type="entry name" value="4-DIPHOSPHOCYTIDYL-2-C-METHYL-D-ERYTHRITOL KINASE, CHLOROPLASTIC"/>
    <property type="match status" value="1"/>
</dbReference>
<dbReference type="Pfam" id="PF00288">
    <property type="entry name" value="GHMP_kinases_N"/>
    <property type="match status" value="1"/>
</dbReference>
<dbReference type="PIRSF" id="PIRSF010376">
    <property type="entry name" value="IspE"/>
    <property type="match status" value="1"/>
</dbReference>
<dbReference type="SUPFAM" id="SSF55060">
    <property type="entry name" value="GHMP Kinase, C-terminal domain"/>
    <property type="match status" value="1"/>
</dbReference>
<dbReference type="SUPFAM" id="SSF54211">
    <property type="entry name" value="Ribosomal protein S5 domain 2-like"/>
    <property type="match status" value="1"/>
</dbReference>
<reference key="1">
    <citation type="journal article" date="1999" name="Nature">
        <title>Evidence for lateral gene transfer between Archaea and Bacteria from genome sequence of Thermotoga maritima.</title>
        <authorList>
            <person name="Nelson K.E."/>
            <person name="Clayton R.A."/>
            <person name="Gill S.R."/>
            <person name="Gwinn M.L."/>
            <person name="Dodson R.J."/>
            <person name="Haft D.H."/>
            <person name="Hickey E.K."/>
            <person name="Peterson J.D."/>
            <person name="Nelson W.C."/>
            <person name="Ketchum K.A."/>
            <person name="McDonald L.A."/>
            <person name="Utterback T.R."/>
            <person name="Malek J.A."/>
            <person name="Linher K.D."/>
            <person name="Garrett M.M."/>
            <person name="Stewart A.M."/>
            <person name="Cotton M.D."/>
            <person name="Pratt M.S."/>
            <person name="Phillips C.A."/>
            <person name="Richardson D.L."/>
            <person name="Heidelberg J.F."/>
            <person name="Sutton G.G."/>
            <person name="Fleischmann R.D."/>
            <person name="Eisen J.A."/>
            <person name="White O."/>
            <person name="Salzberg S.L."/>
            <person name="Smith H.O."/>
            <person name="Venter J.C."/>
            <person name="Fraser C.M."/>
        </authorList>
    </citation>
    <scope>NUCLEOTIDE SEQUENCE [LARGE SCALE GENOMIC DNA]</scope>
    <source>
        <strain>ATCC 43589 / DSM 3109 / JCM 10099 / NBRC 100826 / MSB8</strain>
    </source>
</reference>
<protein>
    <recommendedName>
        <fullName evidence="1">4-diphosphocytidyl-2-C-methyl-D-erythritol kinase</fullName>
        <shortName evidence="1">CMK</shortName>
        <ecNumber evidence="1">2.7.1.148</ecNumber>
    </recommendedName>
    <alternativeName>
        <fullName evidence="1">4-(cytidine-5'-diphospho)-2-C-methyl-D-erythritol kinase</fullName>
    </alternativeName>
</protein>
<organism>
    <name type="scientific">Thermotoga maritima (strain ATCC 43589 / DSM 3109 / JCM 10099 / NBRC 100826 / MSB8)</name>
    <dbReference type="NCBI Taxonomy" id="243274"/>
    <lineage>
        <taxon>Bacteria</taxon>
        <taxon>Thermotogati</taxon>
        <taxon>Thermotogota</taxon>
        <taxon>Thermotogae</taxon>
        <taxon>Thermotogales</taxon>
        <taxon>Thermotogaceae</taxon>
        <taxon>Thermotoga</taxon>
    </lineage>
</organism>
<gene>
    <name evidence="1" type="primary">ispE</name>
    <name type="ordered locus">TM_1383</name>
</gene>
<comment type="function">
    <text evidence="1">Catalyzes the phosphorylation of the position 2 hydroxy group of 4-diphosphocytidyl-2C-methyl-D-erythritol.</text>
</comment>
<comment type="catalytic activity">
    <reaction evidence="1">
        <text>4-CDP-2-C-methyl-D-erythritol + ATP = 4-CDP-2-C-methyl-D-erythritol 2-phosphate + ADP + H(+)</text>
        <dbReference type="Rhea" id="RHEA:18437"/>
        <dbReference type="ChEBI" id="CHEBI:15378"/>
        <dbReference type="ChEBI" id="CHEBI:30616"/>
        <dbReference type="ChEBI" id="CHEBI:57823"/>
        <dbReference type="ChEBI" id="CHEBI:57919"/>
        <dbReference type="ChEBI" id="CHEBI:456216"/>
        <dbReference type="EC" id="2.7.1.148"/>
    </reaction>
</comment>
<comment type="pathway">
    <text evidence="1">Isoprenoid biosynthesis; isopentenyl diphosphate biosynthesis via DXP pathway; isopentenyl diphosphate from 1-deoxy-D-xylulose 5-phosphate: step 3/6.</text>
</comment>
<comment type="similarity">
    <text evidence="1">Belongs to the GHMP kinase family. IspE subfamily.</text>
</comment>
<name>ISPE_THEMA</name>